<comment type="function">
    <text evidence="1">Catalyzes the alpha,beta-elimination reaction of D-cysteine and of several D-cysteine derivatives. It could be a defense mechanism against D-cysteine.</text>
</comment>
<comment type="catalytic activity">
    <reaction evidence="1">
        <text>D-cysteine + H2O = hydrogen sulfide + pyruvate + NH4(+) + H(+)</text>
        <dbReference type="Rhea" id="RHEA:11268"/>
        <dbReference type="ChEBI" id="CHEBI:15361"/>
        <dbReference type="ChEBI" id="CHEBI:15377"/>
        <dbReference type="ChEBI" id="CHEBI:15378"/>
        <dbReference type="ChEBI" id="CHEBI:28938"/>
        <dbReference type="ChEBI" id="CHEBI:29919"/>
        <dbReference type="ChEBI" id="CHEBI:35236"/>
        <dbReference type="EC" id="4.4.1.15"/>
    </reaction>
</comment>
<comment type="cofactor">
    <cofactor evidence="1">
        <name>pyridoxal 5'-phosphate</name>
        <dbReference type="ChEBI" id="CHEBI:597326"/>
    </cofactor>
</comment>
<comment type="subunit">
    <text evidence="1">Homodimer.</text>
</comment>
<comment type="similarity">
    <text evidence="1">Belongs to the ACC deaminase/D-cysteine desulfhydrase family.</text>
</comment>
<evidence type="ECO:0000255" key="1">
    <source>
        <dbReference type="HAMAP-Rule" id="MF_01045"/>
    </source>
</evidence>
<dbReference type="EC" id="4.4.1.15" evidence="1"/>
<dbReference type="EMBL" id="CU928162">
    <property type="protein sequence ID" value="CAR08372.2"/>
    <property type="molecule type" value="Genomic_DNA"/>
</dbReference>
<dbReference type="RefSeq" id="WP_001128215.1">
    <property type="nucleotide sequence ID" value="NC_011745.1"/>
</dbReference>
<dbReference type="SMR" id="B7MWA6"/>
<dbReference type="GeneID" id="75205835"/>
<dbReference type="KEGG" id="ecq:ECED1_2184"/>
<dbReference type="HOGENOM" id="CLU_048897_1_0_6"/>
<dbReference type="Proteomes" id="UP000000748">
    <property type="component" value="Chromosome"/>
</dbReference>
<dbReference type="GO" id="GO:0019148">
    <property type="term" value="F:D-cysteine desulfhydrase activity"/>
    <property type="evidence" value="ECO:0007669"/>
    <property type="project" value="UniProtKB-UniRule"/>
</dbReference>
<dbReference type="GO" id="GO:0046416">
    <property type="term" value="P:D-amino acid metabolic process"/>
    <property type="evidence" value="ECO:0007669"/>
    <property type="project" value="UniProtKB-UniRule"/>
</dbReference>
<dbReference type="CDD" id="cd06449">
    <property type="entry name" value="ACCD"/>
    <property type="match status" value="1"/>
</dbReference>
<dbReference type="FunFam" id="3.40.50.1100:FF:000019">
    <property type="entry name" value="D-cysteine desulfhydrase"/>
    <property type="match status" value="1"/>
</dbReference>
<dbReference type="Gene3D" id="3.40.50.1100">
    <property type="match status" value="2"/>
</dbReference>
<dbReference type="HAMAP" id="MF_01045">
    <property type="entry name" value="D_Cys_desulfhydr"/>
    <property type="match status" value="1"/>
</dbReference>
<dbReference type="InterPro" id="IPR027278">
    <property type="entry name" value="ACCD_DCysDesulf"/>
</dbReference>
<dbReference type="InterPro" id="IPR005966">
    <property type="entry name" value="D-Cys_desShydrase"/>
</dbReference>
<dbReference type="InterPro" id="IPR023702">
    <property type="entry name" value="D_Cys_desulphydr_bac"/>
</dbReference>
<dbReference type="InterPro" id="IPR001926">
    <property type="entry name" value="TrpB-like_PALP"/>
</dbReference>
<dbReference type="InterPro" id="IPR036052">
    <property type="entry name" value="TrpB-like_PALP_sf"/>
</dbReference>
<dbReference type="NCBIfam" id="TIGR01275">
    <property type="entry name" value="ACC_deam_rel"/>
    <property type="match status" value="1"/>
</dbReference>
<dbReference type="NCBIfam" id="NF003029">
    <property type="entry name" value="PRK03910.1-1"/>
    <property type="match status" value="1"/>
</dbReference>
<dbReference type="NCBIfam" id="NF003030">
    <property type="entry name" value="PRK03910.1-3"/>
    <property type="match status" value="1"/>
</dbReference>
<dbReference type="NCBIfam" id="NF003032">
    <property type="entry name" value="PRK03910.1-5"/>
    <property type="match status" value="1"/>
</dbReference>
<dbReference type="PANTHER" id="PTHR43780">
    <property type="entry name" value="1-AMINOCYCLOPROPANE-1-CARBOXYLATE DEAMINASE-RELATED"/>
    <property type="match status" value="1"/>
</dbReference>
<dbReference type="PANTHER" id="PTHR43780:SF2">
    <property type="entry name" value="1-AMINOCYCLOPROPANE-1-CARBOXYLATE DEAMINASE-RELATED"/>
    <property type="match status" value="1"/>
</dbReference>
<dbReference type="Pfam" id="PF00291">
    <property type="entry name" value="PALP"/>
    <property type="match status" value="1"/>
</dbReference>
<dbReference type="PIRSF" id="PIRSF006278">
    <property type="entry name" value="ACCD_DCysDesulf"/>
    <property type="match status" value="1"/>
</dbReference>
<dbReference type="SUPFAM" id="SSF53686">
    <property type="entry name" value="Tryptophan synthase beta subunit-like PLP-dependent enzymes"/>
    <property type="match status" value="1"/>
</dbReference>
<reference key="1">
    <citation type="journal article" date="2009" name="PLoS Genet.">
        <title>Organised genome dynamics in the Escherichia coli species results in highly diverse adaptive paths.</title>
        <authorList>
            <person name="Touchon M."/>
            <person name="Hoede C."/>
            <person name="Tenaillon O."/>
            <person name="Barbe V."/>
            <person name="Baeriswyl S."/>
            <person name="Bidet P."/>
            <person name="Bingen E."/>
            <person name="Bonacorsi S."/>
            <person name="Bouchier C."/>
            <person name="Bouvet O."/>
            <person name="Calteau A."/>
            <person name="Chiapello H."/>
            <person name="Clermont O."/>
            <person name="Cruveiller S."/>
            <person name="Danchin A."/>
            <person name="Diard M."/>
            <person name="Dossat C."/>
            <person name="Karoui M.E."/>
            <person name="Frapy E."/>
            <person name="Garry L."/>
            <person name="Ghigo J.M."/>
            <person name="Gilles A.M."/>
            <person name="Johnson J."/>
            <person name="Le Bouguenec C."/>
            <person name="Lescat M."/>
            <person name="Mangenot S."/>
            <person name="Martinez-Jehanne V."/>
            <person name="Matic I."/>
            <person name="Nassif X."/>
            <person name="Oztas S."/>
            <person name="Petit M.A."/>
            <person name="Pichon C."/>
            <person name="Rouy Z."/>
            <person name="Ruf C.S."/>
            <person name="Schneider D."/>
            <person name="Tourret J."/>
            <person name="Vacherie B."/>
            <person name="Vallenet D."/>
            <person name="Medigue C."/>
            <person name="Rocha E.P.C."/>
            <person name="Denamur E."/>
        </authorList>
    </citation>
    <scope>NUCLEOTIDE SEQUENCE [LARGE SCALE GENOMIC DNA]</scope>
    <source>
        <strain>ED1a</strain>
    </source>
</reference>
<protein>
    <recommendedName>
        <fullName evidence="1">D-cysteine desulfhydrase</fullName>
        <ecNumber evidence="1">4.4.1.15</ecNumber>
    </recommendedName>
</protein>
<sequence>MPLHNLTRFPRLEFIGAPTPLEYLPRFSDYLGREIFIKRDDVTPMAMGGNKLRKLEFLAADALREGADTLITAGAIQSNHVRQTAAVAAKLGLHCVALLENPIGTTAENYLTNGNRLLLDLFNTQIEMCDALTDPNAQLEELATRVEAQGFRPYVIPVGGSNALGALGYVESALEIAQQCEGAVNISSVVVASGSAGTHAGLAVGLEHLMPESELIGVTVSRSVADQLPKVVNLQQAIAKELELTASAEILLWDDYFAPGYGVPNDEGMEAVKLLARLEGILLDPVYTGKAMAGLIDGISQKRFKDEGPILFIHTGGAPALFAYHPHV</sequence>
<keyword id="KW-0456">Lyase</keyword>
<keyword id="KW-0663">Pyridoxal phosphate</keyword>
<name>DCYD_ECO81</name>
<feature type="chain" id="PRO_1000149601" description="D-cysteine desulfhydrase">
    <location>
        <begin position="1"/>
        <end position="328"/>
    </location>
</feature>
<feature type="modified residue" description="N6-(pyridoxal phosphate)lysine" evidence="1">
    <location>
        <position position="51"/>
    </location>
</feature>
<accession>B7MWA6</accession>
<proteinExistence type="inferred from homology"/>
<organism>
    <name type="scientific">Escherichia coli O81 (strain ED1a)</name>
    <dbReference type="NCBI Taxonomy" id="585397"/>
    <lineage>
        <taxon>Bacteria</taxon>
        <taxon>Pseudomonadati</taxon>
        <taxon>Pseudomonadota</taxon>
        <taxon>Gammaproteobacteria</taxon>
        <taxon>Enterobacterales</taxon>
        <taxon>Enterobacteriaceae</taxon>
        <taxon>Escherichia</taxon>
    </lineage>
</organism>
<gene>
    <name evidence="1" type="primary">dcyD</name>
    <name type="ordered locus">ECED1_2184</name>
</gene>